<protein>
    <recommendedName>
        <fullName evidence="1">Small ribosomal subunit protein uS7</fullName>
    </recommendedName>
    <alternativeName>
        <fullName evidence="2">30S ribosomal protein S7</fullName>
    </alternativeName>
</protein>
<organism>
    <name type="scientific">Shewanella putrefaciens (strain CN-32 / ATCC BAA-453)</name>
    <dbReference type="NCBI Taxonomy" id="319224"/>
    <lineage>
        <taxon>Bacteria</taxon>
        <taxon>Pseudomonadati</taxon>
        <taxon>Pseudomonadota</taxon>
        <taxon>Gammaproteobacteria</taxon>
        <taxon>Alteromonadales</taxon>
        <taxon>Shewanellaceae</taxon>
        <taxon>Shewanella</taxon>
    </lineage>
</organism>
<comment type="function">
    <text evidence="1">One of the primary rRNA binding proteins, it binds directly to 16S rRNA where it nucleates assembly of the head domain of the 30S subunit. Is located at the subunit interface close to the decoding center, probably blocks exit of the E-site tRNA.</text>
</comment>
<comment type="subunit">
    <text evidence="1">Part of the 30S ribosomal subunit. Contacts proteins S9 and S11.</text>
</comment>
<comment type="similarity">
    <text evidence="1">Belongs to the universal ribosomal protein uS7 family.</text>
</comment>
<proteinExistence type="inferred from homology"/>
<evidence type="ECO:0000255" key="1">
    <source>
        <dbReference type="HAMAP-Rule" id="MF_00480"/>
    </source>
</evidence>
<evidence type="ECO:0000305" key="2"/>
<name>RS7_SHEPC</name>
<dbReference type="EMBL" id="CP000681">
    <property type="protein sequence ID" value="ABP77470.1"/>
    <property type="molecule type" value="Genomic_DNA"/>
</dbReference>
<dbReference type="SMR" id="A4YBY7"/>
<dbReference type="STRING" id="319224.Sputcn32_3763"/>
<dbReference type="KEGG" id="spc:Sputcn32_3763"/>
<dbReference type="eggNOG" id="COG0049">
    <property type="taxonomic scope" value="Bacteria"/>
</dbReference>
<dbReference type="HOGENOM" id="CLU_072226_1_1_6"/>
<dbReference type="GO" id="GO:0015935">
    <property type="term" value="C:small ribosomal subunit"/>
    <property type="evidence" value="ECO:0007669"/>
    <property type="project" value="InterPro"/>
</dbReference>
<dbReference type="GO" id="GO:0019843">
    <property type="term" value="F:rRNA binding"/>
    <property type="evidence" value="ECO:0007669"/>
    <property type="project" value="UniProtKB-UniRule"/>
</dbReference>
<dbReference type="GO" id="GO:0003735">
    <property type="term" value="F:structural constituent of ribosome"/>
    <property type="evidence" value="ECO:0007669"/>
    <property type="project" value="InterPro"/>
</dbReference>
<dbReference type="GO" id="GO:0000049">
    <property type="term" value="F:tRNA binding"/>
    <property type="evidence" value="ECO:0007669"/>
    <property type="project" value="UniProtKB-UniRule"/>
</dbReference>
<dbReference type="GO" id="GO:0006412">
    <property type="term" value="P:translation"/>
    <property type="evidence" value="ECO:0007669"/>
    <property type="project" value="UniProtKB-UniRule"/>
</dbReference>
<dbReference type="CDD" id="cd14869">
    <property type="entry name" value="uS7_Bacteria"/>
    <property type="match status" value="1"/>
</dbReference>
<dbReference type="FunFam" id="1.10.455.10:FF:000001">
    <property type="entry name" value="30S ribosomal protein S7"/>
    <property type="match status" value="1"/>
</dbReference>
<dbReference type="Gene3D" id="1.10.455.10">
    <property type="entry name" value="Ribosomal protein S7 domain"/>
    <property type="match status" value="1"/>
</dbReference>
<dbReference type="HAMAP" id="MF_00480_B">
    <property type="entry name" value="Ribosomal_uS7_B"/>
    <property type="match status" value="1"/>
</dbReference>
<dbReference type="InterPro" id="IPR000235">
    <property type="entry name" value="Ribosomal_uS7"/>
</dbReference>
<dbReference type="InterPro" id="IPR005717">
    <property type="entry name" value="Ribosomal_uS7_bac/org-type"/>
</dbReference>
<dbReference type="InterPro" id="IPR020606">
    <property type="entry name" value="Ribosomal_uS7_CS"/>
</dbReference>
<dbReference type="InterPro" id="IPR023798">
    <property type="entry name" value="Ribosomal_uS7_dom"/>
</dbReference>
<dbReference type="InterPro" id="IPR036823">
    <property type="entry name" value="Ribosomal_uS7_dom_sf"/>
</dbReference>
<dbReference type="NCBIfam" id="TIGR01029">
    <property type="entry name" value="rpsG_bact"/>
    <property type="match status" value="1"/>
</dbReference>
<dbReference type="PANTHER" id="PTHR11205">
    <property type="entry name" value="RIBOSOMAL PROTEIN S7"/>
    <property type="match status" value="1"/>
</dbReference>
<dbReference type="Pfam" id="PF00177">
    <property type="entry name" value="Ribosomal_S7"/>
    <property type="match status" value="1"/>
</dbReference>
<dbReference type="PIRSF" id="PIRSF002122">
    <property type="entry name" value="RPS7p_RPS7a_RPS5e_RPS7o"/>
    <property type="match status" value="1"/>
</dbReference>
<dbReference type="SUPFAM" id="SSF47973">
    <property type="entry name" value="Ribosomal protein S7"/>
    <property type="match status" value="1"/>
</dbReference>
<dbReference type="PROSITE" id="PS00052">
    <property type="entry name" value="RIBOSOMAL_S7"/>
    <property type="match status" value="1"/>
</dbReference>
<gene>
    <name evidence="1" type="primary">rpsG</name>
    <name type="ordered locus">Sputcn32_3763</name>
</gene>
<reference key="1">
    <citation type="submission" date="2007-04" db="EMBL/GenBank/DDBJ databases">
        <title>Complete sequence of Shewanella putrefaciens CN-32.</title>
        <authorList>
            <consortium name="US DOE Joint Genome Institute"/>
            <person name="Copeland A."/>
            <person name="Lucas S."/>
            <person name="Lapidus A."/>
            <person name="Barry K."/>
            <person name="Detter J.C."/>
            <person name="Glavina del Rio T."/>
            <person name="Hammon N."/>
            <person name="Israni S."/>
            <person name="Dalin E."/>
            <person name="Tice H."/>
            <person name="Pitluck S."/>
            <person name="Chain P."/>
            <person name="Malfatti S."/>
            <person name="Shin M."/>
            <person name="Vergez L."/>
            <person name="Schmutz J."/>
            <person name="Larimer F."/>
            <person name="Land M."/>
            <person name="Hauser L."/>
            <person name="Kyrpides N."/>
            <person name="Mikhailova N."/>
            <person name="Romine M.F."/>
            <person name="Fredrickson J."/>
            <person name="Tiedje J."/>
            <person name="Richardson P."/>
        </authorList>
    </citation>
    <scope>NUCLEOTIDE SEQUENCE [LARGE SCALE GENOMIC DNA]</scope>
    <source>
        <strain>CN-32 / ATCC BAA-453</strain>
    </source>
</reference>
<feature type="chain" id="PRO_1000014286" description="Small ribosomal subunit protein uS7">
    <location>
        <begin position="1"/>
        <end position="156"/>
    </location>
</feature>
<keyword id="KW-0687">Ribonucleoprotein</keyword>
<keyword id="KW-0689">Ribosomal protein</keyword>
<keyword id="KW-0694">RNA-binding</keyword>
<keyword id="KW-0699">rRNA-binding</keyword>
<keyword id="KW-0820">tRNA-binding</keyword>
<accession>A4YBY7</accession>
<sequence>MPRRRVVGQRKILPDPKFHSELLAKFINVIMQDGKKSTAEKIIYKALDVVAEKKSENHLVILEAALDNVRPSVEVKSRRVGGSTYQVPCEVRPVRRNALAMRWLVEAARKRGEKSMALRLAGEMLDASENKGTAVKKREDVHRMAEANKAFAHYRW</sequence>